<comment type="function">
    <text evidence="1">Catalyzes the conversion of 3-deoxy-D-arabino-heptulosonate 7-phosphate (DAHP) to dehydroquinate (DHQ).</text>
</comment>
<comment type="catalytic activity">
    <reaction evidence="1">
        <text>7-phospho-2-dehydro-3-deoxy-D-arabino-heptonate = 3-dehydroquinate + phosphate</text>
        <dbReference type="Rhea" id="RHEA:21968"/>
        <dbReference type="ChEBI" id="CHEBI:32364"/>
        <dbReference type="ChEBI" id="CHEBI:43474"/>
        <dbReference type="ChEBI" id="CHEBI:58394"/>
        <dbReference type="EC" id="4.2.3.4"/>
    </reaction>
</comment>
<comment type="cofactor">
    <cofactor evidence="1">
        <name>Co(2+)</name>
        <dbReference type="ChEBI" id="CHEBI:48828"/>
    </cofactor>
    <cofactor evidence="1">
        <name>Zn(2+)</name>
        <dbReference type="ChEBI" id="CHEBI:29105"/>
    </cofactor>
    <text evidence="1">Binds 1 divalent metal cation per subunit. Can use either Co(2+) or Zn(2+).</text>
</comment>
<comment type="cofactor">
    <cofactor evidence="1">
        <name>NAD(+)</name>
        <dbReference type="ChEBI" id="CHEBI:57540"/>
    </cofactor>
</comment>
<comment type="pathway">
    <text evidence="1">Metabolic intermediate biosynthesis; chorismate biosynthesis; chorismate from D-erythrose 4-phosphate and phosphoenolpyruvate: step 2/7.</text>
</comment>
<comment type="subcellular location">
    <subcellularLocation>
        <location evidence="1">Cytoplasm</location>
    </subcellularLocation>
</comment>
<comment type="similarity">
    <text evidence="1">Belongs to the sugar phosphate cyclases superfamily. Dehydroquinate synthase family.</text>
</comment>
<reference key="1">
    <citation type="journal article" date="2008" name="Chem. Biol. Interact.">
        <title>Extending the Bacillus cereus group genomics to putative food-borne pathogens of different toxicity.</title>
        <authorList>
            <person name="Lapidus A."/>
            <person name="Goltsman E."/>
            <person name="Auger S."/>
            <person name="Galleron N."/>
            <person name="Segurens B."/>
            <person name="Dossat C."/>
            <person name="Land M.L."/>
            <person name="Broussolle V."/>
            <person name="Brillard J."/>
            <person name="Guinebretiere M.-H."/>
            <person name="Sanchis V."/>
            <person name="Nguen-the C."/>
            <person name="Lereclus D."/>
            <person name="Richardson P."/>
            <person name="Wincker P."/>
            <person name="Weissenbach J."/>
            <person name="Ehrlich S.D."/>
            <person name="Sorokin A."/>
        </authorList>
    </citation>
    <scope>NUCLEOTIDE SEQUENCE [LARGE SCALE GENOMIC DNA]</scope>
    <source>
        <strain>DSM 22905 / CIP 110041 / 391-98 / NVH 391-98</strain>
    </source>
</reference>
<organism>
    <name type="scientific">Bacillus cytotoxicus (strain DSM 22905 / CIP 110041 / 391-98 / NVH 391-98)</name>
    <dbReference type="NCBI Taxonomy" id="315749"/>
    <lineage>
        <taxon>Bacteria</taxon>
        <taxon>Bacillati</taxon>
        <taxon>Bacillota</taxon>
        <taxon>Bacilli</taxon>
        <taxon>Bacillales</taxon>
        <taxon>Bacillaceae</taxon>
        <taxon>Bacillus</taxon>
        <taxon>Bacillus cereus group</taxon>
    </lineage>
</organism>
<gene>
    <name evidence="1" type="primary">aroB</name>
    <name type="ordered locus">Bcer98_1240</name>
</gene>
<evidence type="ECO:0000255" key="1">
    <source>
        <dbReference type="HAMAP-Rule" id="MF_00110"/>
    </source>
</evidence>
<proteinExistence type="inferred from homology"/>
<protein>
    <recommendedName>
        <fullName evidence="1">3-dehydroquinate synthase</fullName>
        <shortName evidence="1">DHQS</shortName>
        <ecNumber evidence="1">4.2.3.4</ecNumber>
    </recommendedName>
</protein>
<name>AROB_BACCN</name>
<keyword id="KW-0028">Amino-acid biosynthesis</keyword>
<keyword id="KW-0057">Aromatic amino acid biosynthesis</keyword>
<keyword id="KW-0170">Cobalt</keyword>
<keyword id="KW-0963">Cytoplasm</keyword>
<keyword id="KW-0456">Lyase</keyword>
<keyword id="KW-0479">Metal-binding</keyword>
<keyword id="KW-0520">NAD</keyword>
<keyword id="KW-0547">Nucleotide-binding</keyword>
<keyword id="KW-0862">Zinc</keyword>
<accession>A7GN54</accession>
<feature type="chain" id="PRO_1000094457" description="3-dehydroquinate synthase">
    <location>
        <begin position="1"/>
        <end position="369"/>
    </location>
</feature>
<feature type="binding site" evidence="1">
    <location>
        <begin position="72"/>
        <end position="77"/>
    </location>
    <ligand>
        <name>NAD(+)</name>
        <dbReference type="ChEBI" id="CHEBI:57540"/>
    </ligand>
</feature>
<feature type="binding site" evidence="1">
    <location>
        <begin position="130"/>
        <end position="131"/>
    </location>
    <ligand>
        <name>NAD(+)</name>
        <dbReference type="ChEBI" id="CHEBI:57540"/>
    </ligand>
</feature>
<feature type="binding site" evidence="1">
    <location>
        <position position="142"/>
    </location>
    <ligand>
        <name>NAD(+)</name>
        <dbReference type="ChEBI" id="CHEBI:57540"/>
    </ligand>
</feature>
<feature type="binding site" evidence="1">
    <location>
        <position position="151"/>
    </location>
    <ligand>
        <name>NAD(+)</name>
        <dbReference type="ChEBI" id="CHEBI:57540"/>
    </ligand>
</feature>
<feature type="binding site" evidence="1">
    <location>
        <position position="184"/>
    </location>
    <ligand>
        <name>Zn(2+)</name>
        <dbReference type="ChEBI" id="CHEBI:29105"/>
    </ligand>
</feature>
<feature type="binding site" evidence="1">
    <location>
        <position position="247"/>
    </location>
    <ligand>
        <name>Zn(2+)</name>
        <dbReference type="ChEBI" id="CHEBI:29105"/>
    </ligand>
</feature>
<feature type="binding site" evidence="1">
    <location>
        <position position="264"/>
    </location>
    <ligand>
        <name>Zn(2+)</name>
        <dbReference type="ChEBI" id="CHEBI:29105"/>
    </ligand>
</feature>
<sequence>MESIHIQTTSKKYDVYVGKHVLSSLTEVVQRMKPAVSNVMIISDESVATLHLQKVKEALQIKQDVFSFVIPSGEKEKSFENFYAVHTAALENKLDRNSLIIALGGGMIGDLAGFVAATFMRGIRFVQVPTTLLAHDSAVGGKVAINHPLGKNMIGAFHQPEAVLYHTPFLDSLPEKEWRSGFAEVIKHALIGDVELYHWLKNNVTTLADLRDDKLVYVLKRAIPVKAKIVAQDETEKGVRAHLNFGHTLGHALEKESGYGNITHGDGVAIGMLFAIFLSEQMYKIDLRYKELKQWFLQYGYPSIPRHLKVDRLVNVMKQDKKANAGTIRMVLMQEYGGVHVVSISDKTVHTSLEAFQKDMVLGEEMNFE</sequence>
<dbReference type="EC" id="4.2.3.4" evidence="1"/>
<dbReference type="EMBL" id="CP000764">
    <property type="protein sequence ID" value="ABS21562.1"/>
    <property type="molecule type" value="Genomic_DNA"/>
</dbReference>
<dbReference type="RefSeq" id="WP_011984313.1">
    <property type="nucleotide sequence ID" value="NC_009674.1"/>
</dbReference>
<dbReference type="SMR" id="A7GN54"/>
<dbReference type="STRING" id="315749.Bcer98_1240"/>
<dbReference type="GeneID" id="33896589"/>
<dbReference type="KEGG" id="bcy:Bcer98_1240"/>
<dbReference type="eggNOG" id="COG0337">
    <property type="taxonomic scope" value="Bacteria"/>
</dbReference>
<dbReference type="HOGENOM" id="CLU_001201_0_2_9"/>
<dbReference type="OrthoDB" id="9806583at2"/>
<dbReference type="UniPathway" id="UPA00053">
    <property type="reaction ID" value="UER00085"/>
</dbReference>
<dbReference type="Proteomes" id="UP000002300">
    <property type="component" value="Chromosome"/>
</dbReference>
<dbReference type="GO" id="GO:0005737">
    <property type="term" value="C:cytoplasm"/>
    <property type="evidence" value="ECO:0007669"/>
    <property type="project" value="UniProtKB-SubCell"/>
</dbReference>
<dbReference type="GO" id="GO:0003856">
    <property type="term" value="F:3-dehydroquinate synthase activity"/>
    <property type="evidence" value="ECO:0007669"/>
    <property type="project" value="UniProtKB-UniRule"/>
</dbReference>
<dbReference type="GO" id="GO:0046872">
    <property type="term" value="F:metal ion binding"/>
    <property type="evidence" value="ECO:0007669"/>
    <property type="project" value="UniProtKB-KW"/>
</dbReference>
<dbReference type="GO" id="GO:0000166">
    <property type="term" value="F:nucleotide binding"/>
    <property type="evidence" value="ECO:0007669"/>
    <property type="project" value="UniProtKB-KW"/>
</dbReference>
<dbReference type="GO" id="GO:0008652">
    <property type="term" value="P:amino acid biosynthetic process"/>
    <property type="evidence" value="ECO:0007669"/>
    <property type="project" value="UniProtKB-KW"/>
</dbReference>
<dbReference type="GO" id="GO:0009073">
    <property type="term" value="P:aromatic amino acid family biosynthetic process"/>
    <property type="evidence" value="ECO:0007669"/>
    <property type="project" value="UniProtKB-KW"/>
</dbReference>
<dbReference type="GO" id="GO:0009423">
    <property type="term" value="P:chorismate biosynthetic process"/>
    <property type="evidence" value="ECO:0007669"/>
    <property type="project" value="UniProtKB-UniRule"/>
</dbReference>
<dbReference type="CDD" id="cd08195">
    <property type="entry name" value="DHQS"/>
    <property type="match status" value="1"/>
</dbReference>
<dbReference type="FunFam" id="3.40.50.1970:FF:000001">
    <property type="entry name" value="3-dehydroquinate synthase"/>
    <property type="match status" value="1"/>
</dbReference>
<dbReference type="Gene3D" id="3.40.50.1970">
    <property type="match status" value="1"/>
</dbReference>
<dbReference type="Gene3D" id="1.20.1090.10">
    <property type="entry name" value="Dehydroquinate synthase-like - alpha domain"/>
    <property type="match status" value="1"/>
</dbReference>
<dbReference type="HAMAP" id="MF_00110">
    <property type="entry name" value="DHQ_synthase"/>
    <property type="match status" value="1"/>
</dbReference>
<dbReference type="InterPro" id="IPR050071">
    <property type="entry name" value="Dehydroquinate_synthase"/>
</dbReference>
<dbReference type="InterPro" id="IPR016037">
    <property type="entry name" value="DHQ_synth_AroB"/>
</dbReference>
<dbReference type="InterPro" id="IPR030963">
    <property type="entry name" value="DHQ_synth_fam"/>
</dbReference>
<dbReference type="InterPro" id="IPR030960">
    <property type="entry name" value="DHQS/DOIS_N"/>
</dbReference>
<dbReference type="InterPro" id="IPR056179">
    <property type="entry name" value="DHQS_C"/>
</dbReference>
<dbReference type="NCBIfam" id="TIGR01357">
    <property type="entry name" value="aroB"/>
    <property type="match status" value="1"/>
</dbReference>
<dbReference type="PANTHER" id="PTHR43622">
    <property type="entry name" value="3-DEHYDROQUINATE SYNTHASE"/>
    <property type="match status" value="1"/>
</dbReference>
<dbReference type="PANTHER" id="PTHR43622:SF7">
    <property type="entry name" value="3-DEHYDROQUINATE SYNTHASE, CHLOROPLASTIC"/>
    <property type="match status" value="1"/>
</dbReference>
<dbReference type="Pfam" id="PF01761">
    <property type="entry name" value="DHQ_synthase"/>
    <property type="match status" value="1"/>
</dbReference>
<dbReference type="Pfam" id="PF24621">
    <property type="entry name" value="DHQS_C"/>
    <property type="match status" value="1"/>
</dbReference>
<dbReference type="PIRSF" id="PIRSF001455">
    <property type="entry name" value="DHQ_synth"/>
    <property type="match status" value="1"/>
</dbReference>
<dbReference type="SUPFAM" id="SSF56796">
    <property type="entry name" value="Dehydroquinate synthase-like"/>
    <property type="match status" value="1"/>
</dbReference>